<evidence type="ECO:0000255" key="1">
    <source>
        <dbReference type="HAMAP-Rule" id="MF_00122"/>
    </source>
</evidence>
<gene>
    <name evidence="1" type="primary">gatC</name>
    <name type="ordered locus">RALTA_A0052</name>
</gene>
<accession>B2AG26</accession>
<sequence length="99" mass="11105">MALDLSDVKRIAHLARIETSDDEAAQTLAQLNNFFSLVEQMQAVDTTGIEPQAHPLSAVRDMVQRLREDVVTETDRRADYQRPAPATENGLYLVPKVIE</sequence>
<proteinExistence type="inferred from homology"/>
<dbReference type="EC" id="6.3.5.-" evidence="1"/>
<dbReference type="EMBL" id="CU633749">
    <property type="protein sequence ID" value="CAP62725.1"/>
    <property type="molecule type" value="Genomic_DNA"/>
</dbReference>
<dbReference type="RefSeq" id="WP_012351395.1">
    <property type="nucleotide sequence ID" value="NC_010528.1"/>
</dbReference>
<dbReference type="SMR" id="B2AG26"/>
<dbReference type="GeneID" id="29762915"/>
<dbReference type="KEGG" id="cti:RALTA_A0052"/>
<dbReference type="eggNOG" id="COG0721">
    <property type="taxonomic scope" value="Bacteria"/>
</dbReference>
<dbReference type="HOGENOM" id="CLU_105899_2_2_4"/>
<dbReference type="BioCyc" id="CTAI977880:RALTA_RS00260-MONOMER"/>
<dbReference type="Proteomes" id="UP000001692">
    <property type="component" value="Chromosome 1"/>
</dbReference>
<dbReference type="GO" id="GO:0050566">
    <property type="term" value="F:asparaginyl-tRNA synthase (glutamine-hydrolyzing) activity"/>
    <property type="evidence" value="ECO:0007669"/>
    <property type="project" value="RHEA"/>
</dbReference>
<dbReference type="GO" id="GO:0005524">
    <property type="term" value="F:ATP binding"/>
    <property type="evidence" value="ECO:0007669"/>
    <property type="project" value="UniProtKB-KW"/>
</dbReference>
<dbReference type="GO" id="GO:0050567">
    <property type="term" value="F:glutaminyl-tRNA synthase (glutamine-hydrolyzing) activity"/>
    <property type="evidence" value="ECO:0007669"/>
    <property type="project" value="UniProtKB-UniRule"/>
</dbReference>
<dbReference type="GO" id="GO:0070681">
    <property type="term" value="P:glutaminyl-tRNAGln biosynthesis via transamidation"/>
    <property type="evidence" value="ECO:0007669"/>
    <property type="project" value="TreeGrafter"/>
</dbReference>
<dbReference type="GO" id="GO:0006450">
    <property type="term" value="P:regulation of translational fidelity"/>
    <property type="evidence" value="ECO:0007669"/>
    <property type="project" value="InterPro"/>
</dbReference>
<dbReference type="GO" id="GO:0006412">
    <property type="term" value="P:translation"/>
    <property type="evidence" value="ECO:0007669"/>
    <property type="project" value="UniProtKB-UniRule"/>
</dbReference>
<dbReference type="Gene3D" id="1.10.20.60">
    <property type="entry name" value="Glu-tRNAGln amidotransferase C subunit, N-terminal domain"/>
    <property type="match status" value="1"/>
</dbReference>
<dbReference type="HAMAP" id="MF_00122">
    <property type="entry name" value="GatC"/>
    <property type="match status" value="1"/>
</dbReference>
<dbReference type="InterPro" id="IPR036113">
    <property type="entry name" value="Asp/Glu-ADT_sf_sub_c"/>
</dbReference>
<dbReference type="InterPro" id="IPR003837">
    <property type="entry name" value="GatC"/>
</dbReference>
<dbReference type="NCBIfam" id="TIGR00135">
    <property type="entry name" value="gatC"/>
    <property type="match status" value="1"/>
</dbReference>
<dbReference type="PANTHER" id="PTHR15004">
    <property type="entry name" value="GLUTAMYL-TRNA(GLN) AMIDOTRANSFERASE SUBUNIT C, MITOCHONDRIAL"/>
    <property type="match status" value="1"/>
</dbReference>
<dbReference type="PANTHER" id="PTHR15004:SF0">
    <property type="entry name" value="GLUTAMYL-TRNA(GLN) AMIDOTRANSFERASE SUBUNIT C, MITOCHONDRIAL"/>
    <property type="match status" value="1"/>
</dbReference>
<dbReference type="Pfam" id="PF02686">
    <property type="entry name" value="GatC"/>
    <property type="match status" value="1"/>
</dbReference>
<dbReference type="SUPFAM" id="SSF141000">
    <property type="entry name" value="Glu-tRNAGln amidotransferase C subunit"/>
    <property type="match status" value="1"/>
</dbReference>
<reference key="1">
    <citation type="journal article" date="2008" name="Genome Res.">
        <title>Genome sequence of the beta-rhizobium Cupriavidus taiwanensis and comparative genomics of rhizobia.</title>
        <authorList>
            <person name="Amadou C."/>
            <person name="Pascal G."/>
            <person name="Mangenot S."/>
            <person name="Glew M."/>
            <person name="Bontemps C."/>
            <person name="Capela D."/>
            <person name="Carrere S."/>
            <person name="Cruveiller S."/>
            <person name="Dossat C."/>
            <person name="Lajus A."/>
            <person name="Marchetti M."/>
            <person name="Poinsot V."/>
            <person name="Rouy Z."/>
            <person name="Servin B."/>
            <person name="Saad M."/>
            <person name="Schenowitz C."/>
            <person name="Barbe V."/>
            <person name="Batut J."/>
            <person name="Medigue C."/>
            <person name="Masson-Boivin C."/>
        </authorList>
    </citation>
    <scope>NUCLEOTIDE SEQUENCE [LARGE SCALE GENOMIC DNA]</scope>
    <source>
        <strain>DSM 17343 / BCRC 17206 / CCUG 44338 / CIP 107171 / LMG 19424 / R1</strain>
    </source>
</reference>
<keyword id="KW-0067">ATP-binding</keyword>
<keyword id="KW-0436">Ligase</keyword>
<keyword id="KW-0547">Nucleotide-binding</keyword>
<keyword id="KW-0648">Protein biosynthesis</keyword>
<name>GATC_CUPTR</name>
<organism>
    <name type="scientific">Cupriavidus taiwanensis (strain DSM 17343 / BCRC 17206 / CCUG 44338 / CIP 107171 / LMG 19424 / R1)</name>
    <name type="common">Ralstonia taiwanensis (strain LMG 19424)</name>
    <dbReference type="NCBI Taxonomy" id="977880"/>
    <lineage>
        <taxon>Bacteria</taxon>
        <taxon>Pseudomonadati</taxon>
        <taxon>Pseudomonadota</taxon>
        <taxon>Betaproteobacteria</taxon>
        <taxon>Burkholderiales</taxon>
        <taxon>Burkholderiaceae</taxon>
        <taxon>Cupriavidus</taxon>
    </lineage>
</organism>
<feature type="chain" id="PRO_1000095279" description="Aspartyl/glutamyl-tRNA(Asn/Gln) amidotransferase subunit C">
    <location>
        <begin position="1"/>
        <end position="99"/>
    </location>
</feature>
<comment type="function">
    <text evidence="1">Allows the formation of correctly charged Asn-tRNA(Asn) or Gln-tRNA(Gln) through the transamidation of misacylated Asp-tRNA(Asn) or Glu-tRNA(Gln) in organisms which lack either or both of asparaginyl-tRNA or glutaminyl-tRNA synthetases. The reaction takes place in the presence of glutamine and ATP through an activated phospho-Asp-tRNA(Asn) or phospho-Glu-tRNA(Gln).</text>
</comment>
<comment type="catalytic activity">
    <reaction evidence="1">
        <text>L-glutamyl-tRNA(Gln) + L-glutamine + ATP + H2O = L-glutaminyl-tRNA(Gln) + L-glutamate + ADP + phosphate + H(+)</text>
        <dbReference type="Rhea" id="RHEA:17521"/>
        <dbReference type="Rhea" id="RHEA-COMP:9681"/>
        <dbReference type="Rhea" id="RHEA-COMP:9684"/>
        <dbReference type="ChEBI" id="CHEBI:15377"/>
        <dbReference type="ChEBI" id="CHEBI:15378"/>
        <dbReference type="ChEBI" id="CHEBI:29985"/>
        <dbReference type="ChEBI" id="CHEBI:30616"/>
        <dbReference type="ChEBI" id="CHEBI:43474"/>
        <dbReference type="ChEBI" id="CHEBI:58359"/>
        <dbReference type="ChEBI" id="CHEBI:78520"/>
        <dbReference type="ChEBI" id="CHEBI:78521"/>
        <dbReference type="ChEBI" id="CHEBI:456216"/>
    </reaction>
</comment>
<comment type="catalytic activity">
    <reaction evidence="1">
        <text>L-aspartyl-tRNA(Asn) + L-glutamine + ATP + H2O = L-asparaginyl-tRNA(Asn) + L-glutamate + ADP + phosphate + 2 H(+)</text>
        <dbReference type="Rhea" id="RHEA:14513"/>
        <dbReference type="Rhea" id="RHEA-COMP:9674"/>
        <dbReference type="Rhea" id="RHEA-COMP:9677"/>
        <dbReference type="ChEBI" id="CHEBI:15377"/>
        <dbReference type="ChEBI" id="CHEBI:15378"/>
        <dbReference type="ChEBI" id="CHEBI:29985"/>
        <dbReference type="ChEBI" id="CHEBI:30616"/>
        <dbReference type="ChEBI" id="CHEBI:43474"/>
        <dbReference type="ChEBI" id="CHEBI:58359"/>
        <dbReference type="ChEBI" id="CHEBI:78515"/>
        <dbReference type="ChEBI" id="CHEBI:78516"/>
        <dbReference type="ChEBI" id="CHEBI:456216"/>
    </reaction>
</comment>
<comment type="subunit">
    <text evidence="1">Heterotrimer of A, B and C subunits.</text>
</comment>
<comment type="similarity">
    <text evidence="1">Belongs to the GatC family.</text>
</comment>
<protein>
    <recommendedName>
        <fullName evidence="1">Aspartyl/glutamyl-tRNA(Asn/Gln) amidotransferase subunit C</fullName>
        <shortName evidence="1">Asp/Glu-ADT subunit C</shortName>
        <ecNumber evidence="1">6.3.5.-</ecNumber>
    </recommendedName>
</protein>